<keyword id="KW-0007">Acetylation</keyword>
<keyword id="KW-0025">Alternative splicing</keyword>
<keyword id="KW-0067">ATP-binding</keyword>
<keyword id="KW-0150">Chloroplast</keyword>
<keyword id="KW-0472">Membrane</keyword>
<keyword id="KW-0547">Nucleotide-binding</keyword>
<keyword id="KW-0934">Plastid</keyword>
<keyword id="KW-0653">Protein transport</keyword>
<keyword id="KW-1185">Reference proteome</keyword>
<keyword id="KW-0793">Thylakoid</keyword>
<keyword id="KW-0809">Transit peptide</keyword>
<keyword id="KW-1278">Translocase</keyword>
<keyword id="KW-0811">Translocation</keyword>
<keyword id="KW-0813">Transport</keyword>
<protein>
    <recommendedName>
        <fullName evidence="8">Protein translocase subunit SECA1, chloroplastic</fullName>
        <shortName evidence="6">AtcpSecA</shortName>
        <ecNumber evidence="9">7.4.2.4</ecNumber>
    </recommendedName>
    <alternativeName>
        <fullName evidence="6">Protein ALBINO OR GLASSY YELLOW 1</fullName>
    </alternativeName>
</protein>
<gene>
    <name evidence="7" type="primary">SECA1</name>
    <name evidence="6" type="synonym">AGY1</name>
    <name evidence="10" type="ordered locus">At4g01800</name>
    <name evidence="11" type="ORF">T7B11.6</name>
</gene>
<proteinExistence type="evidence at protein level"/>
<accession>Q9SYI0</accession>
<dbReference type="EC" id="7.4.2.4" evidence="9"/>
<dbReference type="EMBL" id="AC007138">
    <property type="protein sequence ID" value="AAD22642.1"/>
    <property type="status" value="ALT_SEQ"/>
    <property type="molecule type" value="Genomic_DNA"/>
</dbReference>
<dbReference type="EMBL" id="AL161492">
    <property type="protein sequence ID" value="CAB77750.1"/>
    <property type="status" value="ALT_SEQ"/>
    <property type="molecule type" value="Genomic_DNA"/>
</dbReference>
<dbReference type="EMBL" id="CP002687">
    <property type="protein sequence ID" value="AEE82078.1"/>
    <property type="molecule type" value="Genomic_DNA"/>
</dbReference>
<dbReference type="EMBL" id="BX827284">
    <property type="status" value="NOT_ANNOTATED_CDS"/>
    <property type="molecule type" value="mRNA"/>
</dbReference>
<dbReference type="PIR" id="B85023">
    <property type="entry name" value="B85023"/>
</dbReference>
<dbReference type="RefSeq" id="NP_192089.1">
    <molecule id="Q9SYI0-1"/>
    <property type="nucleotide sequence ID" value="NM_116410.2"/>
</dbReference>
<dbReference type="SMR" id="Q9SYI0"/>
<dbReference type="FunCoup" id="Q9SYI0">
    <property type="interactions" value="1043"/>
</dbReference>
<dbReference type="STRING" id="3702.Q9SYI0"/>
<dbReference type="TCDB" id="3.A.5.4.2">
    <property type="family name" value="the general secretory pathway (sec) family"/>
</dbReference>
<dbReference type="GlyGen" id="Q9SYI0">
    <property type="glycosylation" value="2 sites"/>
</dbReference>
<dbReference type="iPTMnet" id="Q9SYI0"/>
<dbReference type="PaxDb" id="3702-AT4G01800.2"/>
<dbReference type="ProteomicsDB" id="232970">
    <molecule id="Q9SYI0-1"/>
</dbReference>
<dbReference type="EnsemblPlants" id="AT4G01800.1">
    <molecule id="Q9SYI0-1"/>
    <property type="protein sequence ID" value="AT4G01800.1"/>
    <property type="gene ID" value="AT4G01800"/>
</dbReference>
<dbReference type="GeneID" id="827922"/>
<dbReference type="Gramene" id="AT4G01800.1">
    <molecule id="Q9SYI0-1"/>
    <property type="protein sequence ID" value="AT4G01800.1"/>
    <property type="gene ID" value="AT4G01800"/>
</dbReference>
<dbReference type="KEGG" id="ath:AT4G01800"/>
<dbReference type="Araport" id="AT4G01800"/>
<dbReference type="TAIR" id="AT4G01800">
    <property type="gene designation" value="AGY1"/>
</dbReference>
<dbReference type="eggNOG" id="ENOG502QS7I">
    <property type="taxonomic scope" value="Eukaryota"/>
</dbReference>
<dbReference type="HOGENOM" id="CLU_005314_3_0_1"/>
<dbReference type="InParanoid" id="Q9SYI0"/>
<dbReference type="PhylomeDB" id="Q9SYI0"/>
<dbReference type="PRO" id="PR:Q9SYI0"/>
<dbReference type="Proteomes" id="UP000006548">
    <property type="component" value="Chromosome 4"/>
</dbReference>
<dbReference type="ExpressionAtlas" id="Q9SYI0">
    <property type="expression patterns" value="baseline and differential"/>
</dbReference>
<dbReference type="GO" id="GO:0009570">
    <property type="term" value="C:chloroplast stroma"/>
    <property type="evidence" value="ECO:0007669"/>
    <property type="project" value="UniProtKB-SubCell"/>
</dbReference>
<dbReference type="GO" id="GO:0009535">
    <property type="term" value="C:chloroplast thylakoid membrane"/>
    <property type="evidence" value="ECO:0007669"/>
    <property type="project" value="UniProtKB-SubCell"/>
</dbReference>
<dbReference type="GO" id="GO:0005524">
    <property type="term" value="F:ATP binding"/>
    <property type="evidence" value="ECO:0007669"/>
    <property type="project" value="UniProtKB-KW"/>
</dbReference>
<dbReference type="GO" id="GO:0016464">
    <property type="term" value="F:chloroplast protein-transporting ATPase activity"/>
    <property type="evidence" value="ECO:0007669"/>
    <property type="project" value="UniProtKB-EC"/>
</dbReference>
<dbReference type="GO" id="GO:0006886">
    <property type="term" value="P:intracellular protein transport"/>
    <property type="evidence" value="ECO:0007669"/>
    <property type="project" value="InterPro"/>
</dbReference>
<dbReference type="GO" id="GO:0017038">
    <property type="term" value="P:protein import"/>
    <property type="evidence" value="ECO:0007669"/>
    <property type="project" value="InterPro"/>
</dbReference>
<dbReference type="GO" id="GO:0006605">
    <property type="term" value="P:protein targeting"/>
    <property type="evidence" value="ECO:0007669"/>
    <property type="project" value="InterPro"/>
</dbReference>
<dbReference type="CDD" id="cd17928">
    <property type="entry name" value="DEXDc_SecA"/>
    <property type="match status" value="1"/>
</dbReference>
<dbReference type="CDD" id="cd18803">
    <property type="entry name" value="SF2_C_secA"/>
    <property type="match status" value="1"/>
</dbReference>
<dbReference type="FunFam" id="3.90.1440.10:FF:000003">
    <property type="entry name" value="Preprotein translocase SecA subunit"/>
    <property type="match status" value="1"/>
</dbReference>
<dbReference type="FunFam" id="1.10.3060.10:FF:000003">
    <property type="entry name" value="Protein translocase subunit SecA"/>
    <property type="match status" value="1"/>
</dbReference>
<dbReference type="FunFam" id="3.40.50.300:FF:000334">
    <property type="entry name" value="Protein translocase subunit SecA"/>
    <property type="match status" value="1"/>
</dbReference>
<dbReference type="Gene3D" id="1.10.3060.10">
    <property type="entry name" value="Helical scaffold and wing domains of SecA"/>
    <property type="match status" value="1"/>
</dbReference>
<dbReference type="Gene3D" id="3.40.50.300">
    <property type="entry name" value="P-loop containing nucleotide triphosphate hydrolases"/>
    <property type="match status" value="2"/>
</dbReference>
<dbReference type="Gene3D" id="3.90.1440.10">
    <property type="entry name" value="SecA, preprotein cross-linking domain"/>
    <property type="match status" value="1"/>
</dbReference>
<dbReference type="HAMAP" id="MF_01382">
    <property type="entry name" value="SecA"/>
    <property type="match status" value="1"/>
</dbReference>
<dbReference type="InterPro" id="IPR014001">
    <property type="entry name" value="Helicase_ATP-bd"/>
</dbReference>
<dbReference type="InterPro" id="IPR027417">
    <property type="entry name" value="P-loop_NTPase"/>
</dbReference>
<dbReference type="InterPro" id="IPR000185">
    <property type="entry name" value="SecA"/>
</dbReference>
<dbReference type="InterPro" id="IPR020937">
    <property type="entry name" value="SecA_CS"/>
</dbReference>
<dbReference type="InterPro" id="IPR011115">
    <property type="entry name" value="SecA_DEAD"/>
</dbReference>
<dbReference type="InterPro" id="IPR014018">
    <property type="entry name" value="SecA_motor_DEAD"/>
</dbReference>
<dbReference type="InterPro" id="IPR011130">
    <property type="entry name" value="SecA_preprotein_X-link_dom"/>
</dbReference>
<dbReference type="InterPro" id="IPR044722">
    <property type="entry name" value="SecA_SF2_C"/>
</dbReference>
<dbReference type="InterPro" id="IPR011116">
    <property type="entry name" value="SecA_Wing/Scaffold"/>
</dbReference>
<dbReference type="InterPro" id="IPR036266">
    <property type="entry name" value="SecA_Wing/Scaffold_sf"/>
</dbReference>
<dbReference type="InterPro" id="IPR036670">
    <property type="entry name" value="SecA_X-link_sf"/>
</dbReference>
<dbReference type="NCBIfam" id="TIGR00963">
    <property type="entry name" value="secA"/>
    <property type="match status" value="1"/>
</dbReference>
<dbReference type="PANTHER" id="PTHR30612:SF0">
    <property type="entry name" value="CHLOROPLAST PROTEIN-TRANSPORTING ATPASE"/>
    <property type="match status" value="1"/>
</dbReference>
<dbReference type="PANTHER" id="PTHR30612">
    <property type="entry name" value="SECA INNER MEMBRANE COMPONENT OF SEC PROTEIN SECRETION SYSTEM"/>
    <property type="match status" value="1"/>
</dbReference>
<dbReference type="Pfam" id="PF21090">
    <property type="entry name" value="P-loop_SecA"/>
    <property type="match status" value="1"/>
</dbReference>
<dbReference type="Pfam" id="PF07517">
    <property type="entry name" value="SecA_DEAD"/>
    <property type="match status" value="1"/>
</dbReference>
<dbReference type="Pfam" id="PF01043">
    <property type="entry name" value="SecA_PP_bind"/>
    <property type="match status" value="1"/>
</dbReference>
<dbReference type="Pfam" id="PF07516">
    <property type="entry name" value="SecA_SW"/>
    <property type="match status" value="1"/>
</dbReference>
<dbReference type="PRINTS" id="PR00906">
    <property type="entry name" value="SECA"/>
</dbReference>
<dbReference type="SMART" id="SM00957">
    <property type="entry name" value="SecA_DEAD"/>
    <property type="match status" value="1"/>
</dbReference>
<dbReference type="SMART" id="SM00958">
    <property type="entry name" value="SecA_PP_bind"/>
    <property type="match status" value="1"/>
</dbReference>
<dbReference type="SUPFAM" id="SSF81886">
    <property type="entry name" value="Helical scaffold and wing domains of SecA"/>
    <property type="match status" value="1"/>
</dbReference>
<dbReference type="SUPFAM" id="SSF52540">
    <property type="entry name" value="P-loop containing nucleoside triphosphate hydrolases"/>
    <property type="match status" value="2"/>
</dbReference>
<dbReference type="SUPFAM" id="SSF81767">
    <property type="entry name" value="Pre-protein crosslinking domain of SecA"/>
    <property type="match status" value="1"/>
</dbReference>
<dbReference type="PROSITE" id="PS01312">
    <property type="entry name" value="SECA"/>
    <property type="match status" value="1"/>
</dbReference>
<dbReference type="PROSITE" id="PS51196">
    <property type="entry name" value="SECA_MOTOR_DEAD"/>
    <property type="match status" value="1"/>
</dbReference>
<feature type="transit peptide" description="Chloroplast" evidence="12">
    <location>
        <begin position="1"/>
        <end position="72"/>
    </location>
</feature>
<feature type="chain" id="PRO_0000031985" description="Protein translocase subunit SECA1, chloroplastic">
    <location>
        <begin position="73"/>
        <end position="1022"/>
    </location>
</feature>
<feature type="region of interest" description="Disordered" evidence="3">
    <location>
        <begin position="985"/>
        <end position="1022"/>
    </location>
</feature>
<feature type="compositionally biased region" description="Polar residues" evidence="3">
    <location>
        <begin position="993"/>
        <end position="1002"/>
    </location>
</feature>
<feature type="binding site" evidence="2">
    <location>
        <begin position="176"/>
        <end position="183"/>
    </location>
    <ligand>
        <name>ATP</name>
        <dbReference type="ChEBI" id="CHEBI:30616"/>
    </ligand>
</feature>
<feature type="modified residue" description="N-acetylserine" evidence="12">
    <location>
        <position position="73"/>
    </location>
</feature>
<name>SECA1_ARATH</name>
<organism>
    <name type="scientific">Arabidopsis thaliana</name>
    <name type="common">Mouse-ear cress</name>
    <dbReference type="NCBI Taxonomy" id="3702"/>
    <lineage>
        <taxon>Eukaryota</taxon>
        <taxon>Viridiplantae</taxon>
        <taxon>Streptophyta</taxon>
        <taxon>Embryophyta</taxon>
        <taxon>Tracheophyta</taxon>
        <taxon>Spermatophyta</taxon>
        <taxon>Magnoliopsida</taxon>
        <taxon>eudicotyledons</taxon>
        <taxon>Gunneridae</taxon>
        <taxon>Pentapetalae</taxon>
        <taxon>rosids</taxon>
        <taxon>malvids</taxon>
        <taxon>Brassicales</taxon>
        <taxon>Brassicaceae</taxon>
        <taxon>Camelineae</taxon>
        <taxon>Arabidopsis</taxon>
    </lineage>
</organism>
<sequence>MVSPLCDSQLLYHRPSISPTASQFVIADGIILRQNRLLSSSSFWGTKFGNTVKLGVSGCSSCSRKRSTSVNASLGGLLSGIFKGSDNGESTRQQYASIVASVNRLETEISALSDSELRERTDALKQRAQKGESMDSLLPEAFAVVREASKRVLGLRPFDVQLIGGMVLHKGEIAEMRTGEGKTLVAILPAYLNALSGKGVHVVTVNDYLARRDCEWVGQVPRFLGLKVGLIQQNMTPEQRKENYLCDITYVTNSELGFDYLRDNLATSVEELVLRDFNYCVIDEVDSILIDEARTPLIISGPAEKPSDQYYKAAKIASAFERDIHYTVDEKQKTVLLTEQGYEDAEEILDVKDLYDPREQWASYVLNAIKAKELFLRDVNYIIRAKEVLIVDEFTGRVMQGRRWSDGLHQAVEAKEGLPIQNESITLASISYQNFFLQFPKLCGMTGTASTESAEFESIYKLKVTIVPTNKPMIRKDESDVVFKAVNGKWRAVVVEISRMHKTGRAVLVGTTSVEQSDELSQLLREAGITHEVLNAKPENVEREAEIVAQSGRLGAVTIATNMAGRGTDIILGGNAEFMARLKLREILMPRVVKPTDGVFVSVKKAPPKRTWKVNEKLFPCKLSNEKAKLAEEAVQSAVEAWGQKSLTELEAEERLSYSCEKGPVQDEVIGKLRTAFLAIAKEYKGYTDEERKKVVEAGGLHVVGTERHESRRIDNQLRGRSGRQGDPGSSRFFLSLEDNIFRIFGGDRIQGMMRAFRVEDLPIESKMLTKALDEAQRKVENYFFDIRKQLFEFDEVLNSQRDRVYTERRRALVSDSLEPLIIEYAELTMDDILEANIGPDTPKESWDFEKLIAKVQQYCYLLNDLTPDLLKSEGSSYEGLQDYLRARGRDAYLQKREIVEKQSPGLMKDAERFLILSNIDRLWKEHLQALKFVQQAVGLRGYAQRDPLIEYKLEGYNLFLEMMAQIRRNVIYSIYQFQPVRVKKDEEKKSQNGKPSKQVDNASEKPKQVGVTDEPSSIASA</sequence>
<evidence type="ECO:0000250" key="1">
    <source>
        <dbReference type="UniProtKB" id="Q41062"/>
    </source>
</evidence>
<evidence type="ECO:0000255" key="2"/>
<evidence type="ECO:0000256" key="3">
    <source>
        <dbReference type="SAM" id="MobiDB-lite"/>
    </source>
</evidence>
<evidence type="ECO:0000269" key="4">
    <source>
    </source>
</evidence>
<evidence type="ECO:0000269" key="5">
    <source>
    </source>
</evidence>
<evidence type="ECO:0000303" key="6">
    <source>
    </source>
</evidence>
<evidence type="ECO:0000303" key="7">
    <source>
    </source>
</evidence>
<evidence type="ECO:0000305" key="8"/>
<evidence type="ECO:0000305" key="9">
    <source>
    </source>
</evidence>
<evidence type="ECO:0000312" key="10">
    <source>
        <dbReference type="Araport" id="AT4G01800"/>
    </source>
</evidence>
<evidence type="ECO:0000312" key="11">
    <source>
        <dbReference type="EMBL" id="AAD22642.1"/>
    </source>
</evidence>
<evidence type="ECO:0007744" key="12">
    <source>
    </source>
</evidence>
<reference key="1">
    <citation type="journal article" date="1999" name="Nature">
        <title>Sequence and analysis of chromosome 4 of the plant Arabidopsis thaliana.</title>
        <authorList>
            <person name="Mayer K.F.X."/>
            <person name="Schueller C."/>
            <person name="Wambutt R."/>
            <person name="Murphy G."/>
            <person name="Volckaert G."/>
            <person name="Pohl T."/>
            <person name="Duesterhoeft A."/>
            <person name="Stiekema W."/>
            <person name="Entian K.-D."/>
            <person name="Terryn N."/>
            <person name="Harris B."/>
            <person name="Ansorge W."/>
            <person name="Brandt P."/>
            <person name="Grivell L.A."/>
            <person name="Rieger M."/>
            <person name="Weichselgartner M."/>
            <person name="de Simone V."/>
            <person name="Obermaier B."/>
            <person name="Mache R."/>
            <person name="Mueller M."/>
            <person name="Kreis M."/>
            <person name="Delseny M."/>
            <person name="Puigdomenech P."/>
            <person name="Watson M."/>
            <person name="Schmidtheini T."/>
            <person name="Reichert B."/>
            <person name="Portetelle D."/>
            <person name="Perez-Alonso M."/>
            <person name="Boutry M."/>
            <person name="Bancroft I."/>
            <person name="Vos P."/>
            <person name="Hoheisel J."/>
            <person name="Zimmermann W."/>
            <person name="Wedler H."/>
            <person name="Ridley P."/>
            <person name="Langham S.-A."/>
            <person name="McCullagh B."/>
            <person name="Bilham L."/>
            <person name="Robben J."/>
            <person name="van der Schueren J."/>
            <person name="Grymonprez B."/>
            <person name="Chuang Y.-J."/>
            <person name="Vandenbussche F."/>
            <person name="Braeken M."/>
            <person name="Weltjens I."/>
            <person name="Voet M."/>
            <person name="Bastiaens I."/>
            <person name="Aert R."/>
            <person name="Defoor E."/>
            <person name="Weitzenegger T."/>
            <person name="Bothe G."/>
            <person name="Ramsperger U."/>
            <person name="Hilbert H."/>
            <person name="Braun M."/>
            <person name="Holzer E."/>
            <person name="Brandt A."/>
            <person name="Peters S."/>
            <person name="van Staveren M."/>
            <person name="Dirkse W."/>
            <person name="Mooijman P."/>
            <person name="Klein Lankhorst R."/>
            <person name="Rose M."/>
            <person name="Hauf J."/>
            <person name="Koetter P."/>
            <person name="Berneiser S."/>
            <person name="Hempel S."/>
            <person name="Feldpausch M."/>
            <person name="Lamberth S."/>
            <person name="Van den Daele H."/>
            <person name="De Keyser A."/>
            <person name="Buysshaert C."/>
            <person name="Gielen J."/>
            <person name="Villarroel R."/>
            <person name="De Clercq R."/>
            <person name="van Montagu M."/>
            <person name="Rogers J."/>
            <person name="Cronin A."/>
            <person name="Quail M.A."/>
            <person name="Bray-Allen S."/>
            <person name="Clark L."/>
            <person name="Doggett J."/>
            <person name="Hall S."/>
            <person name="Kay M."/>
            <person name="Lennard N."/>
            <person name="McLay K."/>
            <person name="Mayes R."/>
            <person name="Pettett A."/>
            <person name="Rajandream M.A."/>
            <person name="Lyne M."/>
            <person name="Benes V."/>
            <person name="Rechmann S."/>
            <person name="Borkova D."/>
            <person name="Bloecker H."/>
            <person name="Scharfe M."/>
            <person name="Grimm M."/>
            <person name="Loehnert T.-H."/>
            <person name="Dose S."/>
            <person name="de Haan M."/>
            <person name="Maarse A.C."/>
            <person name="Schaefer M."/>
            <person name="Mueller-Auer S."/>
            <person name="Gabel C."/>
            <person name="Fuchs M."/>
            <person name="Fartmann B."/>
            <person name="Granderath K."/>
            <person name="Dauner D."/>
            <person name="Herzl A."/>
            <person name="Neumann S."/>
            <person name="Argiriou A."/>
            <person name="Vitale D."/>
            <person name="Liguori R."/>
            <person name="Piravandi E."/>
            <person name="Massenet O."/>
            <person name="Quigley F."/>
            <person name="Clabauld G."/>
            <person name="Muendlein A."/>
            <person name="Felber R."/>
            <person name="Schnabl S."/>
            <person name="Hiller R."/>
            <person name="Schmidt W."/>
            <person name="Lecharny A."/>
            <person name="Aubourg S."/>
            <person name="Chefdor F."/>
            <person name="Cooke R."/>
            <person name="Berger C."/>
            <person name="Monfort A."/>
            <person name="Casacuberta E."/>
            <person name="Gibbons T."/>
            <person name="Weber N."/>
            <person name="Vandenbol M."/>
            <person name="Bargues M."/>
            <person name="Terol J."/>
            <person name="Torres A."/>
            <person name="Perez-Perez A."/>
            <person name="Purnelle B."/>
            <person name="Bent E."/>
            <person name="Johnson S."/>
            <person name="Tacon D."/>
            <person name="Jesse T."/>
            <person name="Heijnen L."/>
            <person name="Schwarz S."/>
            <person name="Scholler P."/>
            <person name="Heber S."/>
            <person name="Francs P."/>
            <person name="Bielke C."/>
            <person name="Frishman D."/>
            <person name="Haase D."/>
            <person name="Lemcke K."/>
            <person name="Mewes H.-W."/>
            <person name="Stocker S."/>
            <person name="Zaccaria P."/>
            <person name="Bevan M."/>
            <person name="Wilson R.K."/>
            <person name="de la Bastide M."/>
            <person name="Habermann K."/>
            <person name="Parnell L."/>
            <person name="Dedhia N."/>
            <person name="Gnoj L."/>
            <person name="Schutz K."/>
            <person name="Huang E."/>
            <person name="Spiegel L."/>
            <person name="Sekhon M."/>
            <person name="Murray J."/>
            <person name="Sheet P."/>
            <person name="Cordes M."/>
            <person name="Abu-Threideh J."/>
            <person name="Stoneking T."/>
            <person name="Kalicki J."/>
            <person name="Graves T."/>
            <person name="Harmon G."/>
            <person name="Edwards J."/>
            <person name="Latreille P."/>
            <person name="Courtney L."/>
            <person name="Cloud J."/>
            <person name="Abbott A."/>
            <person name="Scott K."/>
            <person name="Johnson D."/>
            <person name="Minx P."/>
            <person name="Bentley D."/>
            <person name="Fulton B."/>
            <person name="Miller N."/>
            <person name="Greco T."/>
            <person name="Kemp K."/>
            <person name="Kramer J."/>
            <person name="Fulton L."/>
            <person name="Mardis E."/>
            <person name="Dante M."/>
            <person name="Pepin K."/>
            <person name="Hillier L.W."/>
            <person name="Nelson J."/>
            <person name="Spieth J."/>
            <person name="Ryan E."/>
            <person name="Andrews S."/>
            <person name="Geisel C."/>
            <person name="Layman D."/>
            <person name="Du H."/>
            <person name="Ali J."/>
            <person name="Berghoff A."/>
            <person name="Jones K."/>
            <person name="Drone K."/>
            <person name="Cotton M."/>
            <person name="Joshu C."/>
            <person name="Antonoiu B."/>
            <person name="Zidanic M."/>
            <person name="Strong C."/>
            <person name="Sun H."/>
            <person name="Lamar B."/>
            <person name="Yordan C."/>
            <person name="Ma P."/>
            <person name="Zhong J."/>
            <person name="Preston R."/>
            <person name="Vil D."/>
            <person name="Shekher M."/>
            <person name="Matero A."/>
            <person name="Shah R."/>
            <person name="Swaby I.K."/>
            <person name="O'Shaughnessy A."/>
            <person name="Rodriguez M."/>
            <person name="Hoffman J."/>
            <person name="Till S."/>
            <person name="Granat S."/>
            <person name="Shohdy N."/>
            <person name="Hasegawa A."/>
            <person name="Hameed A."/>
            <person name="Lodhi M."/>
            <person name="Johnson A."/>
            <person name="Chen E."/>
            <person name="Marra M.A."/>
            <person name="Martienssen R."/>
            <person name="McCombie W.R."/>
        </authorList>
    </citation>
    <scope>NUCLEOTIDE SEQUENCE [LARGE SCALE GENOMIC DNA]</scope>
    <source>
        <strain>cv. Columbia</strain>
    </source>
</reference>
<reference key="2">
    <citation type="journal article" date="2017" name="Plant J.">
        <title>Araport11: a complete reannotation of the Arabidopsis thaliana reference genome.</title>
        <authorList>
            <person name="Cheng C.Y."/>
            <person name="Krishnakumar V."/>
            <person name="Chan A.P."/>
            <person name="Thibaud-Nissen F."/>
            <person name="Schobel S."/>
            <person name="Town C.D."/>
        </authorList>
    </citation>
    <scope>GENOME REANNOTATION</scope>
    <source>
        <strain>cv. Columbia</strain>
    </source>
</reference>
<reference key="3">
    <citation type="journal article" date="2004" name="Genome Res.">
        <title>Whole genome sequence comparisons and 'full-length' cDNA sequences: a combined approach to evaluate and improve Arabidopsis genome annotation.</title>
        <authorList>
            <person name="Castelli V."/>
            <person name="Aury J.-M."/>
            <person name="Jaillon O."/>
            <person name="Wincker P."/>
            <person name="Clepet C."/>
            <person name="Menard M."/>
            <person name="Cruaud C."/>
            <person name="Quetier F."/>
            <person name="Scarpelli C."/>
            <person name="Schaechter V."/>
            <person name="Temple G."/>
            <person name="Caboche M."/>
            <person name="Weissenbach J."/>
            <person name="Salanoubat M."/>
        </authorList>
    </citation>
    <scope>NUCLEOTIDE SEQUENCE [LARGE SCALE MRNA] OF 942-1022</scope>
    <source>
        <strain>cv. Columbia</strain>
    </source>
</reference>
<reference key="4">
    <citation type="journal article" date="2010" name="J. Exp. Bot.">
        <title>cpSecA, a thylakoid protein translocase subunit, is essential for photosynthetic development in Arabidopsis.</title>
        <authorList>
            <person name="Liu D."/>
            <person name="Gong Q."/>
            <person name="Ma Y."/>
            <person name="Li P."/>
            <person name="Li J."/>
            <person name="Yang S."/>
            <person name="Yuan L."/>
            <person name="Yu Y."/>
            <person name="Pan D."/>
            <person name="Xu F."/>
            <person name="Wang N.N."/>
        </authorList>
    </citation>
    <scope>FUNCTION</scope>
    <scope>TISSUE SPECIFICITY</scope>
    <scope>DEVELOPMENTAL STAGE</scope>
    <scope>INDUCTION</scope>
    <scope>DISRUPTION PHENOTYPE</scope>
</reference>
<reference key="5">
    <citation type="journal article" date="2011" name="Plant Physiol.">
        <title>Plastids contain a second sec translocase system with essential functions.</title>
        <authorList>
            <person name="Skalitzky C.A."/>
            <person name="Martin J.R."/>
            <person name="Harwood J.H."/>
            <person name="Beirne J.J."/>
            <person name="Adamczyk B.J."/>
            <person name="Heck G.R."/>
            <person name="Cline K."/>
            <person name="Fernandez D.E."/>
        </authorList>
    </citation>
    <scope>FUNCTION</scope>
    <scope>CATALYTIC ACTIVITY</scope>
    <scope>DISRUPTION PHENOTYPE</scope>
</reference>
<reference key="6">
    <citation type="journal article" date="2012" name="Mol. Cell. Proteomics">
        <title>Comparative large-scale characterisation of plant vs. mammal proteins reveals similar and idiosyncratic N-alpha acetylation features.</title>
        <authorList>
            <person name="Bienvenut W.V."/>
            <person name="Sumpton D."/>
            <person name="Martinez A."/>
            <person name="Lilla S."/>
            <person name="Espagne C."/>
            <person name="Meinnel T."/>
            <person name="Giglione C."/>
        </authorList>
    </citation>
    <scope>ACETYLATION [LARGE SCALE ANALYSIS] AT SER-73</scope>
    <scope>CLEAVAGE OF TRANSIT PEPTIDE [LARGE SCALE ANALYSIS] AFTER ALA-72</scope>
    <scope>IDENTIFICATION BY MASS SPECTROMETRY [LARGE SCALE ANALYSIS]</scope>
</reference>
<reference key="7">
    <citation type="journal article" date="2013" name="PLoS ONE">
        <title>Genome-wide comparative in silico analysis of the RNA helicase gene family in Zea mays and Glycine max: a comparison with Arabidopsis and Oryza sativa.</title>
        <authorList>
            <person name="Xu R."/>
            <person name="Zhang S."/>
            <person name="Huang J."/>
            <person name="Zheng C."/>
        </authorList>
    </citation>
    <scope>GENE FAMILY</scope>
</reference>
<comment type="function">
    <text evidence="4 5">Has a central role in coupling the hydrolysis of ATP to the transfer of proteins across the thylakoid membrane. Involved in photosynthetic acclimation and required for chloroplast biogenesis.</text>
</comment>
<comment type="catalytic activity">
    <reaction evidence="9">
        <text>ATP + H2O + chloroplast-proteinSide 1 = ADP + phosphate + chloroplast-proteinSide 2.</text>
        <dbReference type="EC" id="7.4.2.4"/>
    </reaction>
</comment>
<comment type="subunit">
    <text>Part of the Sec protein translocation apparatus. Interacts probably with SCY1.</text>
</comment>
<comment type="subcellular location">
    <subcellularLocation>
        <location evidence="1">Plastid</location>
        <location evidence="1">Chloroplast stroma</location>
    </subcellularLocation>
    <subcellularLocation>
        <location evidence="1">Plastid</location>
        <location evidence="1">Chloroplast thylakoid membrane</location>
        <topology evidence="8">Peripheral membrane protein</topology>
    </subcellularLocation>
    <text evidence="1">A minor fraction is associated with the chloroplast thylakoid membrane.</text>
</comment>
<comment type="alternative products">
    <event type="alternative splicing"/>
    <isoform>
        <id>Q9SYI0-1</id>
        <name>1</name>
        <sequence type="displayed"/>
    </isoform>
    <text>A number of isoforms are produced. According to EST sequences.</text>
</comment>
<comment type="tissue specificity">
    <text evidence="4">Expressed in green tissues, including cotyledons, rosette and cauline leaves, and sepals. Also detected at the base and the tip of the trichome.</text>
</comment>
<comment type="developmental stage">
    <text evidence="4">Induced steadily during photomorphogenesis.</text>
</comment>
<comment type="induction">
    <text evidence="4">Up-regulated when light-grown seedlings are shifted to the dark.</text>
</comment>
<comment type="disruption phenotype">
    <text evidence="4 5">Seedling lethal. Albino seedlings with yellow and translucent (glassy) lateral organs when grown heterotrophically.</text>
</comment>
<comment type="miscellaneous">
    <text>Cannot substitute for SECA2.</text>
</comment>
<comment type="similarity">
    <text evidence="8">Belongs to the SecA family.</text>
</comment>
<comment type="sequence caution" evidence="8">
    <conflict type="erroneous gene model prediction">
        <sequence resource="EMBL-CDS" id="AAD22642"/>
    </conflict>
</comment>
<comment type="sequence caution" evidence="8">
    <conflict type="erroneous gene model prediction">
        <sequence resource="EMBL-CDS" id="CAB77750"/>
    </conflict>
</comment>